<evidence type="ECO:0000250" key="1">
    <source>
        <dbReference type="UniProtKB" id="Q9FFF6"/>
    </source>
</evidence>
<evidence type="ECO:0000255" key="2">
    <source>
        <dbReference type="PROSITE-ProRule" id="PRU00805"/>
    </source>
</evidence>
<evidence type="ECO:0000269" key="3">
    <source>
    </source>
</evidence>
<evidence type="ECO:0000269" key="4">
    <source>
    </source>
</evidence>
<evidence type="ECO:0000269" key="5">
    <source>
    </source>
</evidence>
<evidence type="ECO:0000269" key="6">
    <source>
    </source>
</evidence>
<evidence type="ECO:0000269" key="7">
    <source>
    </source>
</evidence>
<evidence type="ECO:0000303" key="8">
    <source>
    </source>
</evidence>
<evidence type="ECO:0000303" key="9">
    <source>
    </source>
</evidence>
<evidence type="ECO:0000303" key="10">
    <source>
    </source>
</evidence>
<evidence type="ECO:0000303" key="11">
    <source>
    </source>
</evidence>
<evidence type="ECO:0000305" key="12"/>
<evidence type="ECO:0000312" key="13">
    <source>
        <dbReference type="Araport" id="AT3G55970"/>
    </source>
</evidence>
<evidence type="ECO:0000312" key="14">
    <source>
        <dbReference type="EMBL" id="CAB87851.1"/>
    </source>
</evidence>
<sequence>MNIFQDWPEPIVRVQSLSESNLGAIPNRYVKPLSQRPNITPHNKHNPQTTTIPIIDLGRLYTDDLTLQAKTLDEISKACRELGFFQVVNHGMSPQLMDQAKATWREFFNLPMELKNMHANSPKTYEGYGSRLGVEKGAILDWSDYYYLHYQPSSLKDYTKWPSLPLHCREILEDYCKEMVKLCENLMKILSKNLGLQEDRLQNAFGGKEESGGCLRVNYYPKCPQPELTLGISPHSDPGGLTILLPDEQVASLQVRGSDDAWITVEPAPHAFIVNMGDQIQMLSNSIYKSVEHRVIVNPENERLSLAFFYNPKGNVPIEPLKELVTVDSPALYSSTTYDRYRQFIRTQGPRSKCHIDELKSPR</sequence>
<keyword id="KW-0223">Dioxygenase</keyword>
<keyword id="KW-0408">Iron</keyword>
<keyword id="KW-1184">Jasmonic acid signaling pathway</keyword>
<keyword id="KW-0479">Metal-binding</keyword>
<keyword id="KW-0560">Oxidoreductase</keyword>
<keyword id="KW-0611">Plant defense</keyword>
<keyword id="KW-1185">Reference proteome</keyword>
<proteinExistence type="evidence at protein level"/>
<dbReference type="EC" id="1.14.11.-" evidence="6 7"/>
<dbReference type="EMBL" id="AJ298225">
    <property type="protein sequence ID" value="CAC19787.1"/>
    <property type="molecule type" value="mRNA"/>
</dbReference>
<dbReference type="EMBL" id="AL163832">
    <property type="protein sequence ID" value="CAB87851.1"/>
    <property type="molecule type" value="Genomic_DNA"/>
</dbReference>
<dbReference type="EMBL" id="CP002686">
    <property type="protein sequence ID" value="AEE79462.1"/>
    <property type="molecule type" value="Genomic_DNA"/>
</dbReference>
<dbReference type="EMBL" id="AK229205">
    <property type="protein sequence ID" value="BAF01075.1"/>
    <property type="molecule type" value="mRNA"/>
</dbReference>
<dbReference type="PIR" id="T49209">
    <property type="entry name" value="T49209"/>
</dbReference>
<dbReference type="RefSeq" id="NP_191156.1">
    <property type="nucleotide sequence ID" value="NM_115455.5"/>
</dbReference>
<dbReference type="SMR" id="Q9LY48"/>
<dbReference type="FunCoup" id="Q9LY48">
    <property type="interactions" value="7"/>
</dbReference>
<dbReference type="STRING" id="3702.Q9LY48"/>
<dbReference type="iPTMnet" id="Q9LY48"/>
<dbReference type="PaxDb" id="3702-AT3G55970.1"/>
<dbReference type="ProteomicsDB" id="222152"/>
<dbReference type="EnsemblPlants" id="AT3G55970.1">
    <property type="protein sequence ID" value="AT3G55970.1"/>
    <property type="gene ID" value="AT3G55970"/>
</dbReference>
<dbReference type="GeneID" id="824763"/>
<dbReference type="Gramene" id="AT3G55970.1">
    <property type="protein sequence ID" value="AT3G55970.1"/>
    <property type="gene ID" value="AT3G55970"/>
</dbReference>
<dbReference type="KEGG" id="ath:AT3G55970"/>
<dbReference type="Araport" id="AT3G55970"/>
<dbReference type="TAIR" id="AT3G55970">
    <property type="gene designation" value="JRG21"/>
</dbReference>
<dbReference type="eggNOG" id="KOG0143">
    <property type="taxonomic scope" value="Eukaryota"/>
</dbReference>
<dbReference type="HOGENOM" id="CLU_010119_16_0_1"/>
<dbReference type="InParanoid" id="Q9LY48"/>
<dbReference type="OMA" id="PRSKCHI"/>
<dbReference type="PhylomeDB" id="Q9LY48"/>
<dbReference type="BioCyc" id="ARA:AT3G55970-MONOMER"/>
<dbReference type="PRO" id="PR:Q9LY48"/>
<dbReference type="Proteomes" id="UP000006548">
    <property type="component" value="Chromosome 3"/>
</dbReference>
<dbReference type="ExpressionAtlas" id="Q9LY48">
    <property type="expression patterns" value="baseline and differential"/>
</dbReference>
<dbReference type="GO" id="GO:0051213">
    <property type="term" value="F:dioxygenase activity"/>
    <property type="evidence" value="ECO:0007669"/>
    <property type="project" value="UniProtKB-KW"/>
</dbReference>
<dbReference type="GO" id="GO:0005506">
    <property type="term" value="F:iron ion binding"/>
    <property type="evidence" value="ECO:0000250"/>
    <property type="project" value="UniProtKB"/>
</dbReference>
<dbReference type="GO" id="GO:0120091">
    <property type="term" value="F:jasmonic acid hydrolase"/>
    <property type="evidence" value="ECO:0000314"/>
    <property type="project" value="UniProtKB"/>
</dbReference>
<dbReference type="GO" id="GO:0006952">
    <property type="term" value="P:defense response"/>
    <property type="evidence" value="ECO:0007669"/>
    <property type="project" value="UniProtKB-KW"/>
</dbReference>
<dbReference type="GO" id="GO:1900366">
    <property type="term" value="P:negative regulation of defense response to insect"/>
    <property type="evidence" value="ECO:0000315"/>
    <property type="project" value="UniProtKB"/>
</dbReference>
<dbReference type="GO" id="GO:1900150">
    <property type="term" value="P:regulation of defense response to fungus"/>
    <property type="evidence" value="ECO:0000315"/>
    <property type="project" value="UniProtKB"/>
</dbReference>
<dbReference type="GO" id="GO:2000022">
    <property type="term" value="P:regulation of jasmonic acid mediated signaling pathway"/>
    <property type="evidence" value="ECO:0000316"/>
    <property type="project" value="TAIR"/>
</dbReference>
<dbReference type="FunFam" id="2.60.120.330:FF:000008">
    <property type="entry name" value="Jasmonate-regulated gene 21"/>
    <property type="match status" value="1"/>
</dbReference>
<dbReference type="Gene3D" id="2.60.120.330">
    <property type="entry name" value="B-lactam Antibiotic, Isopenicillin N Synthase, Chain"/>
    <property type="match status" value="1"/>
</dbReference>
<dbReference type="InterPro" id="IPR026992">
    <property type="entry name" value="DIOX_N"/>
</dbReference>
<dbReference type="InterPro" id="IPR044861">
    <property type="entry name" value="IPNS-like_FE2OG_OXY"/>
</dbReference>
<dbReference type="InterPro" id="IPR027443">
    <property type="entry name" value="IPNS-like_sf"/>
</dbReference>
<dbReference type="InterPro" id="IPR005123">
    <property type="entry name" value="Oxoglu/Fe-dep_dioxygenase_dom"/>
</dbReference>
<dbReference type="InterPro" id="IPR050295">
    <property type="entry name" value="Plant_2OG-oxidoreductases"/>
</dbReference>
<dbReference type="PANTHER" id="PTHR47991">
    <property type="entry name" value="OXOGLUTARATE/IRON-DEPENDENT DIOXYGENASE"/>
    <property type="match status" value="1"/>
</dbReference>
<dbReference type="Pfam" id="PF03171">
    <property type="entry name" value="2OG-FeII_Oxy"/>
    <property type="match status" value="1"/>
</dbReference>
<dbReference type="Pfam" id="PF14226">
    <property type="entry name" value="DIOX_N"/>
    <property type="match status" value="1"/>
</dbReference>
<dbReference type="PRINTS" id="PR00682">
    <property type="entry name" value="IPNSYNTHASE"/>
</dbReference>
<dbReference type="SUPFAM" id="SSF51197">
    <property type="entry name" value="Clavaminate synthase-like"/>
    <property type="match status" value="1"/>
</dbReference>
<dbReference type="PROSITE" id="PS51471">
    <property type="entry name" value="FE2OG_OXY"/>
    <property type="match status" value="1"/>
</dbReference>
<organism>
    <name type="scientific">Arabidopsis thaliana</name>
    <name type="common">Mouse-ear cress</name>
    <dbReference type="NCBI Taxonomy" id="3702"/>
    <lineage>
        <taxon>Eukaryota</taxon>
        <taxon>Viridiplantae</taxon>
        <taxon>Streptophyta</taxon>
        <taxon>Embryophyta</taxon>
        <taxon>Tracheophyta</taxon>
        <taxon>Spermatophyta</taxon>
        <taxon>Magnoliopsida</taxon>
        <taxon>eudicotyledons</taxon>
        <taxon>Gunneridae</taxon>
        <taxon>Pentapetalae</taxon>
        <taxon>rosids</taxon>
        <taxon>malvids</taxon>
        <taxon>Brassicales</taxon>
        <taxon>Brassicaceae</taxon>
        <taxon>Camelineae</taxon>
        <taxon>Arabidopsis</taxon>
    </lineage>
</organism>
<gene>
    <name evidence="10" type="primary">JOX3</name>
    <name evidence="11" type="synonym">JAO3</name>
    <name evidence="9" type="synonym">JRG21</name>
    <name evidence="13" type="ordered locus">At3g55970</name>
    <name evidence="14" type="ORF">F27K19_150</name>
</gene>
<feature type="chain" id="PRO_0000438433" description="Jasmonate-induced oxygenase 3">
    <location>
        <begin position="1"/>
        <end position="363"/>
    </location>
</feature>
<feature type="domain" description="Fe2OG dioxygenase" evidence="2">
    <location>
        <begin position="210"/>
        <end position="312"/>
    </location>
</feature>
<feature type="binding site" evidence="1">
    <location>
        <position position="216"/>
    </location>
    <ligand>
        <name>jasmonate</name>
        <dbReference type="ChEBI" id="CHEBI:58431"/>
    </ligand>
</feature>
<feature type="binding site" evidence="1">
    <location>
        <position position="218"/>
    </location>
    <ligand>
        <name>2-oxoglutarate</name>
        <dbReference type="ChEBI" id="CHEBI:16810"/>
    </ligand>
</feature>
<feature type="binding site" evidence="1">
    <location>
        <position position="220"/>
    </location>
    <ligand>
        <name>2-oxoglutarate</name>
        <dbReference type="ChEBI" id="CHEBI:16810"/>
    </ligand>
</feature>
<feature type="binding site" evidence="2">
    <location>
        <position position="235"/>
    </location>
    <ligand>
        <name>Fe cation</name>
        <dbReference type="ChEBI" id="CHEBI:24875"/>
    </ligand>
</feature>
<feature type="binding site" evidence="2">
    <location>
        <position position="237"/>
    </location>
    <ligand>
        <name>Fe cation</name>
        <dbReference type="ChEBI" id="CHEBI:24875"/>
    </ligand>
</feature>
<feature type="binding site" evidence="2">
    <location>
        <position position="293"/>
    </location>
    <ligand>
        <name>Fe cation</name>
        <dbReference type="ChEBI" id="CHEBI:24875"/>
    </ligand>
</feature>
<feature type="binding site" evidence="2">
    <location>
        <position position="303"/>
    </location>
    <ligand>
        <name>2-oxoglutarate</name>
        <dbReference type="ChEBI" id="CHEBI:16810"/>
    </ligand>
</feature>
<feature type="binding site" evidence="1">
    <location>
        <position position="305"/>
    </location>
    <ligand>
        <name>2-oxoglutarate</name>
        <dbReference type="ChEBI" id="CHEBI:16810"/>
    </ligand>
</feature>
<feature type="binding site" evidence="1">
    <location>
        <position position="342"/>
    </location>
    <ligand>
        <name>jasmonate</name>
        <dbReference type="ChEBI" id="CHEBI:58431"/>
    </ligand>
</feature>
<feature type="binding site" evidence="1">
    <location>
        <position position="346"/>
    </location>
    <ligand>
        <name>jasmonate</name>
        <dbReference type="ChEBI" id="CHEBI:58431"/>
    </ligand>
</feature>
<comment type="function">
    <text evidence="6 7">2-oxoglutarate-dependent dioxygenase involved in the oxidation of jasmonate (JA), a stress-induced phytohormone synthesized in response to attack by pathogens and herbivores, which triggers the activation of defense responses via the JA-mediated signaling pathway (PubMed:28559313, PubMed:28760569). Converts JA to 12-hydroxyjasmonate (12OH-JA), an inactive form of JA (PubMed:28559313, PubMed:28760569). Is specific to free JA, and cannot oxidize the bioactive form jasmonoyl-L-isoleucine (JA-Ile) or other JA-amino acid conjugates (PubMed:28760569). Prevents over-accumulation of JA and indirectly its bioactive form JA-Ile under stress response (PubMed:28559313, PubMed:28760569). Acts as a negative regulator of JA-mediated defense signaling, by contributing to 12OH-JA accumulation, which represses JA defense responses upon infection by the fungal pathogen Botrytis cinerea (PubMed:28559313, PubMed:28760569). Acts as a negative regulator of JA-mediated defense responses upon infestation by the herbivorous caterpillar Mamestra brassicae (PubMed:28559313).</text>
</comment>
<comment type="catalytic activity">
    <reaction evidence="6 7">
        <text>jasmonate + 2-oxoglutarate + O2 = (1R,2R)-12-hydroxyjasmonate + succinate + CO2</text>
        <dbReference type="Rhea" id="RHEA:67144"/>
        <dbReference type="ChEBI" id="CHEBI:15379"/>
        <dbReference type="ChEBI" id="CHEBI:16526"/>
        <dbReference type="ChEBI" id="CHEBI:16810"/>
        <dbReference type="ChEBI" id="CHEBI:30031"/>
        <dbReference type="ChEBI" id="CHEBI:58431"/>
        <dbReference type="ChEBI" id="CHEBI:132022"/>
    </reaction>
    <physiologicalReaction direction="left-to-right" evidence="6 7">
        <dbReference type="Rhea" id="RHEA:67145"/>
    </physiologicalReaction>
</comment>
<comment type="cofactor">
    <cofactor evidence="6 7">
        <name>L-ascorbate</name>
        <dbReference type="ChEBI" id="CHEBI:38290"/>
    </cofactor>
</comment>
<comment type="cofactor">
    <cofactor evidence="2 6 7">
        <name>Fe(2+)</name>
        <dbReference type="ChEBI" id="CHEBI:29033"/>
    </cofactor>
    <text evidence="2">Binds 1 Fe(2+) ion per subunit.</text>
</comment>
<comment type="induction">
    <text evidence="3 4 5 6 7">Induced by methyl jasmonate (MeJA) (PubMed:20565618, PubMed:28559313). Induced by infection with the bacterial pathogen Pseudomonas syringae pv. maculicola (PubMed:15098125, PubMed:20565618). Induced by wounding (PubMed:17544464, PubMed:28760569). Induced by infection with the fungal pathogen Botrytis cinerea (PubMed:28559313, PubMed:28760569). Induced by infestation with the caterpillar Mamestra brassicae (PubMed:28559313).</text>
</comment>
<comment type="disruption phenotype">
    <text evidence="6">The quadruple mutant jox1, jox2, jox3 and jox4 exhibit reduced root and shoot growth, delayed flowering, reduced seed production, constitutively elevated jasmonate and jasmonoyl-L-isoleucine levels, and enhanced resistance to the necrotrophic fungal pathogen Botrytis cinerea and the herbivorous caterpillar Mamestra brassicae.</text>
</comment>
<comment type="similarity">
    <text evidence="12">Belongs to the iron/ascorbate-dependent oxidoreductase family.</text>
</comment>
<reference key="1">
    <citation type="thesis" date="2001" institute="University of Halle-Wittenberg" country="Germany">
        <title>Arabidopsis thaliana mRNA for putative leucoanthocyanidin dioxygenase.</title>
        <authorList>
            <person name="Bau S."/>
        </authorList>
    </citation>
    <scope>NUCLEOTIDE SEQUENCE [MRNA]</scope>
    <source>
        <strain>cv. Columbia</strain>
    </source>
</reference>
<reference key="2">
    <citation type="journal article" date="2000" name="Nature">
        <title>Sequence and analysis of chromosome 3 of the plant Arabidopsis thaliana.</title>
        <authorList>
            <person name="Salanoubat M."/>
            <person name="Lemcke K."/>
            <person name="Rieger M."/>
            <person name="Ansorge W."/>
            <person name="Unseld M."/>
            <person name="Fartmann B."/>
            <person name="Valle G."/>
            <person name="Bloecker H."/>
            <person name="Perez-Alonso M."/>
            <person name="Obermaier B."/>
            <person name="Delseny M."/>
            <person name="Boutry M."/>
            <person name="Grivell L.A."/>
            <person name="Mache R."/>
            <person name="Puigdomenech P."/>
            <person name="De Simone V."/>
            <person name="Choisne N."/>
            <person name="Artiguenave F."/>
            <person name="Robert C."/>
            <person name="Brottier P."/>
            <person name="Wincker P."/>
            <person name="Cattolico L."/>
            <person name="Weissenbach J."/>
            <person name="Saurin W."/>
            <person name="Quetier F."/>
            <person name="Schaefer M."/>
            <person name="Mueller-Auer S."/>
            <person name="Gabel C."/>
            <person name="Fuchs M."/>
            <person name="Benes V."/>
            <person name="Wurmbach E."/>
            <person name="Drzonek H."/>
            <person name="Erfle H."/>
            <person name="Jordan N."/>
            <person name="Bangert S."/>
            <person name="Wiedelmann R."/>
            <person name="Kranz H."/>
            <person name="Voss H."/>
            <person name="Holland R."/>
            <person name="Brandt P."/>
            <person name="Nyakatura G."/>
            <person name="Vezzi A."/>
            <person name="D'Angelo M."/>
            <person name="Pallavicini A."/>
            <person name="Toppo S."/>
            <person name="Simionati B."/>
            <person name="Conrad A."/>
            <person name="Hornischer K."/>
            <person name="Kauer G."/>
            <person name="Loehnert T.-H."/>
            <person name="Nordsiek G."/>
            <person name="Reichelt J."/>
            <person name="Scharfe M."/>
            <person name="Schoen O."/>
            <person name="Bargues M."/>
            <person name="Terol J."/>
            <person name="Climent J."/>
            <person name="Navarro P."/>
            <person name="Collado C."/>
            <person name="Perez-Perez A."/>
            <person name="Ottenwaelder B."/>
            <person name="Duchemin D."/>
            <person name="Cooke R."/>
            <person name="Laudie M."/>
            <person name="Berger-Llauro C."/>
            <person name="Purnelle B."/>
            <person name="Masuy D."/>
            <person name="de Haan M."/>
            <person name="Maarse A.C."/>
            <person name="Alcaraz J.-P."/>
            <person name="Cottet A."/>
            <person name="Casacuberta E."/>
            <person name="Monfort A."/>
            <person name="Argiriou A."/>
            <person name="Flores M."/>
            <person name="Liguori R."/>
            <person name="Vitale D."/>
            <person name="Mannhaupt G."/>
            <person name="Haase D."/>
            <person name="Schoof H."/>
            <person name="Rudd S."/>
            <person name="Zaccaria P."/>
            <person name="Mewes H.-W."/>
            <person name="Mayer K.F.X."/>
            <person name="Kaul S."/>
            <person name="Town C.D."/>
            <person name="Koo H.L."/>
            <person name="Tallon L.J."/>
            <person name="Jenkins J."/>
            <person name="Rooney T."/>
            <person name="Rizzo M."/>
            <person name="Walts A."/>
            <person name="Utterback T."/>
            <person name="Fujii C.Y."/>
            <person name="Shea T.P."/>
            <person name="Creasy T.H."/>
            <person name="Haas B."/>
            <person name="Maiti R."/>
            <person name="Wu D."/>
            <person name="Peterson J."/>
            <person name="Van Aken S."/>
            <person name="Pai G."/>
            <person name="Militscher J."/>
            <person name="Sellers P."/>
            <person name="Gill J.E."/>
            <person name="Feldblyum T.V."/>
            <person name="Preuss D."/>
            <person name="Lin X."/>
            <person name="Nierman W.C."/>
            <person name="Salzberg S.L."/>
            <person name="White O."/>
            <person name="Venter J.C."/>
            <person name="Fraser C.M."/>
            <person name="Kaneko T."/>
            <person name="Nakamura Y."/>
            <person name="Sato S."/>
            <person name="Kato T."/>
            <person name="Asamizu E."/>
            <person name="Sasamoto S."/>
            <person name="Kimura T."/>
            <person name="Idesawa K."/>
            <person name="Kawashima K."/>
            <person name="Kishida Y."/>
            <person name="Kiyokawa C."/>
            <person name="Kohara M."/>
            <person name="Matsumoto M."/>
            <person name="Matsuno A."/>
            <person name="Muraki A."/>
            <person name="Nakayama S."/>
            <person name="Nakazaki N."/>
            <person name="Shinpo S."/>
            <person name="Takeuchi C."/>
            <person name="Wada T."/>
            <person name="Watanabe A."/>
            <person name="Yamada M."/>
            <person name="Yasuda M."/>
            <person name="Tabata S."/>
        </authorList>
    </citation>
    <scope>NUCLEOTIDE SEQUENCE [LARGE SCALE GENOMIC DNA]</scope>
    <source>
        <strain>cv. Columbia</strain>
    </source>
</reference>
<reference key="3">
    <citation type="journal article" date="2017" name="Plant J.">
        <title>Araport11: a complete reannotation of the Arabidopsis thaliana reference genome.</title>
        <authorList>
            <person name="Cheng C.Y."/>
            <person name="Krishnakumar V."/>
            <person name="Chan A.P."/>
            <person name="Thibaud-Nissen F."/>
            <person name="Schobel S."/>
            <person name="Town C.D."/>
        </authorList>
    </citation>
    <scope>GENOME REANNOTATION</scope>
    <source>
        <strain>cv. Columbia</strain>
    </source>
</reference>
<reference key="4">
    <citation type="submission" date="2006-07" db="EMBL/GenBank/DDBJ databases">
        <title>Large-scale analysis of RIKEN Arabidopsis full-length (RAFL) cDNAs.</title>
        <authorList>
            <person name="Totoki Y."/>
            <person name="Seki M."/>
            <person name="Ishida J."/>
            <person name="Nakajima M."/>
            <person name="Enju A."/>
            <person name="Kamiya A."/>
            <person name="Narusaka M."/>
            <person name="Shin-i T."/>
            <person name="Nakagawa M."/>
            <person name="Sakamoto N."/>
            <person name="Oishi K."/>
            <person name="Kohara Y."/>
            <person name="Kobayashi M."/>
            <person name="Toyoda A."/>
            <person name="Sakaki Y."/>
            <person name="Sakurai T."/>
            <person name="Iida K."/>
            <person name="Akiyama K."/>
            <person name="Satou M."/>
            <person name="Toyoda T."/>
            <person name="Konagaya A."/>
            <person name="Carninci P."/>
            <person name="Kawai J."/>
            <person name="Hayashizaki Y."/>
            <person name="Shinozaki K."/>
        </authorList>
    </citation>
    <scope>NUCLEOTIDE SEQUENCE [LARGE SCALE MRNA]</scope>
    <source>
        <strain>cv. Columbia</strain>
    </source>
</reference>
<reference key="5">
    <citation type="journal article" date="2004" name="Mol. Plant Pathol.">
        <title>The jasmonate-insensitive mutant jin1 shows increased resistance to biotrophic as well as necrotrophic pathogens.</title>
        <authorList>
            <person name="Nickstadt A."/>
            <person name="Thomma B.P."/>
            <person name="Feussner I."/>
            <person name="Kangasjaervi J."/>
            <person name="Zeier J."/>
            <person name="Loeffler C."/>
            <person name="Scheel D."/>
            <person name="Berger S."/>
        </authorList>
    </citation>
    <scope>INDUCTION</scope>
</reference>
<reference key="6">
    <citation type="journal article" date="2004" name="Planta">
        <title>Light conditions influence specific defence responses in incompatible plant-pathogen interactions: uncoupling systemic resistance from salicylic acid and PR-1 accumulation.</title>
        <authorList>
            <person name="Zeier J."/>
            <person name="Pink B."/>
            <person name="Mueller M.J."/>
            <person name="Berger S."/>
        </authorList>
    </citation>
    <scope>INDUCTION BY BACTERIAL INFECTION</scope>
</reference>
<reference key="7">
    <citation type="journal article" date="2007" name="Phytochemistry">
        <title>Jasmonate biosynthesis in Arabidopsis thaliana requires peroxisomal beta-oxidation enzymes--additional proof by properties of pex6 and aim1.</title>
        <authorList>
            <person name="Delker C."/>
            <person name="Zolman B.K."/>
            <person name="Miersch O."/>
            <person name="Wasternack C."/>
        </authorList>
    </citation>
    <scope>INDUCTION BY WOUNDING</scope>
</reference>
<reference key="8">
    <citation type="journal article" date="2017" name="Mol. Plant">
        <title>Jasmonic acid oxidase 2 hydroxylates jasmonic acid and represses basal defense and resistance responses against Botrytis cinerea infection.</title>
        <authorList>
            <person name="Smirnova E."/>
            <person name="Marquis V."/>
            <person name="Poirier L."/>
            <person name="Aubert Y."/>
            <person name="Zumsteg J."/>
            <person name="Menard R."/>
            <person name="Miesch L."/>
            <person name="Heitz T."/>
        </authorList>
    </citation>
    <scope>FUNCTION</scope>
    <scope>CATALYTIC ACTIVITY</scope>
    <scope>COFACTOR</scope>
    <scope>INDUCTION</scope>
</reference>
<reference key="9">
    <citation type="journal article" date="2017" name="Proc. Natl. Acad. Sci. U.S.A.">
        <title>Arabidopsis JASMONATE-INDUCED OXYGENASES down-regulate plant immunity by hydroxylation and inactivation of the hormone jasmonic acid.</title>
        <authorList>
            <person name="Caarls L."/>
            <person name="Elberse J."/>
            <person name="Awwanah M."/>
            <person name="Ludwig N.R."/>
            <person name="de Vries M."/>
            <person name="Zeilmaker T."/>
            <person name="Van Wees S.C.M."/>
            <person name="Schuurink R.C."/>
            <person name="Van den Ackerveken G."/>
        </authorList>
    </citation>
    <scope>FUNCTION</scope>
    <scope>CATALYTIC ACTIVITY</scope>
    <scope>COFACTOR</scope>
    <scope>INDUCTION</scope>
    <scope>DISRUPTION PHENOTYPE</scope>
</reference>
<name>JOX3_ARATH</name>
<accession>Q9LY48</accession>
<protein>
    <recommendedName>
        <fullName evidence="10">Jasmonate-induced oxygenase 3</fullName>
        <ecNumber evidence="6 7">1.14.11.-</ecNumber>
    </recommendedName>
    <alternativeName>
        <fullName evidence="12">2-oxoglutarate-dependent dioxygenase JOX3</fullName>
    </alternativeName>
    <alternativeName>
        <fullName evidence="11">Jasmonic acid oxidase 3</fullName>
    </alternativeName>
    <alternativeName>
        <fullName evidence="8">Protein JASMONATE-REGULATED GENE 21</fullName>
    </alternativeName>
</protein>